<organism>
    <name type="scientific">Burkholderia lata (strain ATCC 17760 / DSM 23089 / LMG 22485 / NCIMB 9086 / R18194 / 383)</name>
    <dbReference type="NCBI Taxonomy" id="482957"/>
    <lineage>
        <taxon>Bacteria</taxon>
        <taxon>Pseudomonadati</taxon>
        <taxon>Pseudomonadota</taxon>
        <taxon>Betaproteobacteria</taxon>
        <taxon>Burkholderiales</taxon>
        <taxon>Burkholderiaceae</taxon>
        <taxon>Burkholderia</taxon>
        <taxon>Burkholderia cepacia complex</taxon>
    </lineage>
</organism>
<proteinExistence type="inferred from homology"/>
<comment type="function">
    <text evidence="1">Quinone reductase that provides resistance to thiol-specific stress caused by electrophilic quinones.</text>
</comment>
<comment type="function">
    <text evidence="1">Also exhibits azoreductase activity. Catalyzes the reductive cleavage of the azo bond in aromatic azo compounds to the corresponding amines.</text>
</comment>
<comment type="catalytic activity">
    <reaction evidence="1">
        <text>2 a quinone + NADH + H(+) = 2 a 1,4-benzosemiquinone + NAD(+)</text>
        <dbReference type="Rhea" id="RHEA:65952"/>
        <dbReference type="ChEBI" id="CHEBI:15378"/>
        <dbReference type="ChEBI" id="CHEBI:57540"/>
        <dbReference type="ChEBI" id="CHEBI:57945"/>
        <dbReference type="ChEBI" id="CHEBI:132124"/>
        <dbReference type="ChEBI" id="CHEBI:134225"/>
    </reaction>
</comment>
<comment type="catalytic activity">
    <reaction evidence="1">
        <text>N,N-dimethyl-1,4-phenylenediamine + anthranilate + 2 NAD(+) = 2-(4-dimethylaminophenyl)diazenylbenzoate + 2 NADH + 2 H(+)</text>
        <dbReference type="Rhea" id="RHEA:55872"/>
        <dbReference type="ChEBI" id="CHEBI:15378"/>
        <dbReference type="ChEBI" id="CHEBI:15783"/>
        <dbReference type="ChEBI" id="CHEBI:16567"/>
        <dbReference type="ChEBI" id="CHEBI:57540"/>
        <dbReference type="ChEBI" id="CHEBI:57945"/>
        <dbReference type="ChEBI" id="CHEBI:71579"/>
        <dbReference type="EC" id="1.7.1.17"/>
    </reaction>
</comment>
<comment type="cofactor">
    <cofactor evidence="1">
        <name>FMN</name>
        <dbReference type="ChEBI" id="CHEBI:58210"/>
    </cofactor>
    <text evidence="1">Binds 1 FMN per subunit.</text>
</comment>
<comment type="subunit">
    <text evidence="1">Homodimer.</text>
</comment>
<comment type="similarity">
    <text evidence="1">Belongs to the azoreductase type 1 family.</text>
</comment>
<reference key="1">
    <citation type="submission" date="2005-10" db="EMBL/GenBank/DDBJ databases">
        <title>Complete sequence of chromosome 3 of Burkholderia sp. 383.</title>
        <authorList>
            <consortium name="US DOE Joint Genome Institute"/>
            <person name="Copeland A."/>
            <person name="Lucas S."/>
            <person name="Lapidus A."/>
            <person name="Barry K."/>
            <person name="Detter J.C."/>
            <person name="Glavina T."/>
            <person name="Hammon N."/>
            <person name="Israni S."/>
            <person name="Pitluck S."/>
            <person name="Chain P."/>
            <person name="Malfatti S."/>
            <person name="Shin M."/>
            <person name="Vergez L."/>
            <person name="Schmutz J."/>
            <person name="Larimer F."/>
            <person name="Land M."/>
            <person name="Kyrpides N."/>
            <person name="Lykidis A."/>
            <person name="Richardson P."/>
        </authorList>
    </citation>
    <scope>NUCLEOTIDE SEQUENCE [LARGE SCALE GENOMIC DNA]</scope>
    <source>
        <strain>ATCC 17760 / DSM 23089 / LMG 22485 / NCIMB 9086 / R18194 / 383</strain>
    </source>
</reference>
<dbReference type="EC" id="1.6.5.-" evidence="1"/>
<dbReference type="EC" id="1.7.1.17" evidence="1"/>
<dbReference type="EMBL" id="CP000150">
    <property type="protein sequence ID" value="ABB06514.1"/>
    <property type="molecule type" value="Genomic_DNA"/>
</dbReference>
<dbReference type="RefSeq" id="WP_011350157.1">
    <property type="nucleotide sequence ID" value="NC_007509.1"/>
</dbReference>
<dbReference type="SMR" id="Q39M02"/>
<dbReference type="GeneID" id="45092834"/>
<dbReference type="KEGG" id="bur:Bcep18194_C7470"/>
<dbReference type="PATRIC" id="fig|482957.22.peg.8067"/>
<dbReference type="HOGENOM" id="CLU_088964_1_0_4"/>
<dbReference type="Proteomes" id="UP000002705">
    <property type="component" value="Chromosome 3"/>
</dbReference>
<dbReference type="GO" id="GO:0009055">
    <property type="term" value="F:electron transfer activity"/>
    <property type="evidence" value="ECO:0007669"/>
    <property type="project" value="UniProtKB-UniRule"/>
</dbReference>
<dbReference type="GO" id="GO:0010181">
    <property type="term" value="F:FMN binding"/>
    <property type="evidence" value="ECO:0007669"/>
    <property type="project" value="UniProtKB-UniRule"/>
</dbReference>
<dbReference type="GO" id="GO:0016652">
    <property type="term" value="F:oxidoreductase activity, acting on NAD(P)H as acceptor"/>
    <property type="evidence" value="ECO:0007669"/>
    <property type="project" value="UniProtKB-UniRule"/>
</dbReference>
<dbReference type="GO" id="GO:0016655">
    <property type="term" value="F:oxidoreductase activity, acting on NAD(P)H, quinone or similar compound as acceptor"/>
    <property type="evidence" value="ECO:0007669"/>
    <property type="project" value="InterPro"/>
</dbReference>
<dbReference type="Gene3D" id="3.40.50.360">
    <property type="match status" value="1"/>
</dbReference>
<dbReference type="HAMAP" id="MF_01216">
    <property type="entry name" value="Azoreductase_type1"/>
    <property type="match status" value="1"/>
</dbReference>
<dbReference type="InterPro" id="IPR003680">
    <property type="entry name" value="Flavodoxin_fold"/>
</dbReference>
<dbReference type="InterPro" id="IPR029039">
    <property type="entry name" value="Flavoprotein-like_sf"/>
</dbReference>
<dbReference type="InterPro" id="IPR050104">
    <property type="entry name" value="FMN-dep_NADH:Q_OxRdtase_AzoR1"/>
</dbReference>
<dbReference type="InterPro" id="IPR023048">
    <property type="entry name" value="NADH:quinone_OxRdtase_FMN_depd"/>
</dbReference>
<dbReference type="PANTHER" id="PTHR43741">
    <property type="entry name" value="FMN-DEPENDENT NADH-AZOREDUCTASE 1"/>
    <property type="match status" value="1"/>
</dbReference>
<dbReference type="PANTHER" id="PTHR43741:SF4">
    <property type="entry name" value="FMN-DEPENDENT NADH:QUINONE OXIDOREDUCTASE"/>
    <property type="match status" value="1"/>
</dbReference>
<dbReference type="Pfam" id="PF02525">
    <property type="entry name" value="Flavodoxin_2"/>
    <property type="match status" value="1"/>
</dbReference>
<dbReference type="SUPFAM" id="SSF52218">
    <property type="entry name" value="Flavoproteins"/>
    <property type="match status" value="1"/>
</dbReference>
<sequence>MTRVLYIEGSPNKDYSASIEVCNAFLDTYRHAHPDHEIQKLDIWNLAIPEFDEAALAAKYAGLSGKALTPSQATAWQRIEQLAAPFHEADKFLFGVPLWNFSIPYKLKHLIDAISQKDVLFTFDGAGFAGKLAGKKAAVIYARGLGYQSPGSFTPAAEFDLQRPYMETWLRFVGVQDVTGIVVERTLFGANGTVDRSRAIDEARTIARTF</sequence>
<protein>
    <recommendedName>
        <fullName evidence="1">FMN-dependent NADH:quinone oxidoreductase 9</fullName>
        <ecNumber evidence="1">1.6.5.-</ecNumber>
    </recommendedName>
    <alternativeName>
        <fullName evidence="1">Azo-dye reductase 9</fullName>
    </alternativeName>
    <alternativeName>
        <fullName evidence="1">FMN-dependent NADH-azo compound oxidoreductase 9</fullName>
    </alternativeName>
    <alternativeName>
        <fullName evidence="1">FMN-dependent NADH-azoreductase 9</fullName>
        <ecNumber evidence="1">1.7.1.17</ecNumber>
    </alternativeName>
</protein>
<evidence type="ECO:0000255" key="1">
    <source>
        <dbReference type="HAMAP-Rule" id="MF_01216"/>
    </source>
</evidence>
<name>AZOR9_BURL3</name>
<keyword id="KW-0285">Flavoprotein</keyword>
<keyword id="KW-0288">FMN</keyword>
<keyword id="KW-0520">NAD</keyword>
<keyword id="KW-0560">Oxidoreductase</keyword>
<feature type="chain" id="PRO_0000245909" description="FMN-dependent NADH:quinone oxidoreductase 9">
    <location>
        <begin position="1"/>
        <end position="210"/>
    </location>
</feature>
<feature type="binding site" evidence="1">
    <location>
        <position position="10"/>
    </location>
    <ligand>
        <name>FMN</name>
        <dbReference type="ChEBI" id="CHEBI:58210"/>
    </ligand>
</feature>
<feature type="binding site" evidence="1">
    <location>
        <begin position="16"/>
        <end position="18"/>
    </location>
    <ligand>
        <name>FMN</name>
        <dbReference type="ChEBI" id="CHEBI:58210"/>
    </ligand>
</feature>
<accession>Q39M02</accession>
<gene>
    <name evidence="1" type="primary">azoR9</name>
    <name type="ordered locus">Bcep18194_C7470</name>
</gene>